<comment type="function">
    <text evidence="3">Catalyzes the removal of elemental sulfur from cysteine to produce alanine.</text>
</comment>
<comment type="catalytic activity">
    <reaction evidence="3">
        <text>(sulfur carrier)-H + L-cysteine = (sulfur carrier)-SH + L-alanine</text>
        <dbReference type="Rhea" id="RHEA:43892"/>
        <dbReference type="Rhea" id="RHEA-COMP:14737"/>
        <dbReference type="Rhea" id="RHEA-COMP:14739"/>
        <dbReference type="ChEBI" id="CHEBI:29917"/>
        <dbReference type="ChEBI" id="CHEBI:35235"/>
        <dbReference type="ChEBI" id="CHEBI:57972"/>
        <dbReference type="ChEBI" id="CHEBI:64428"/>
        <dbReference type="EC" id="2.8.1.7"/>
    </reaction>
</comment>
<comment type="cofactor">
    <cofactor evidence="3">
        <name>pyridoxal 5'-phosphate</name>
        <dbReference type="ChEBI" id="CHEBI:597326"/>
    </cofactor>
</comment>
<comment type="similarity">
    <text evidence="4">Belongs to the class-V pyridoxal-phosphate-dependent aminotransferase family. NifS/IscS subfamily.</text>
</comment>
<dbReference type="EC" id="2.8.1.7" evidence="3"/>
<dbReference type="EMBL" id="AL009126">
    <property type="protein sequence ID" value="CAB14693.2"/>
    <property type="molecule type" value="Genomic_DNA"/>
</dbReference>
<dbReference type="PIR" id="E69981">
    <property type="entry name" value="E69981"/>
</dbReference>
<dbReference type="RefSeq" id="WP_003246057.1">
    <property type="nucleotide sequence ID" value="NZ_OZ025638.1"/>
</dbReference>
<dbReference type="SMR" id="O34599"/>
<dbReference type="FunCoup" id="O34599">
    <property type="interactions" value="682"/>
</dbReference>
<dbReference type="STRING" id="224308.BSU27510"/>
<dbReference type="PaxDb" id="224308-BSU27510"/>
<dbReference type="EnsemblBacteria" id="CAB14693">
    <property type="protein sequence ID" value="CAB14693"/>
    <property type="gene ID" value="BSU_27510"/>
</dbReference>
<dbReference type="GeneID" id="937550"/>
<dbReference type="KEGG" id="bsu:BSU27510"/>
<dbReference type="PATRIC" id="fig|224308.179.peg.2989"/>
<dbReference type="eggNOG" id="COG1104">
    <property type="taxonomic scope" value="Bacteria"/>
</dbReference>
<dbReference type="InParanoid" id="O34599"/>
<dbReference type="OrthoDB" id="9808002at2"/>
<dbReference type="PhylomeDB" id="O34599"/>
<dbReference type="BioCyc" id="BSUB:BSU27510-MONOMER"/>
<dbReference type="Proteomes" id="UP000001570">
    <property type="component" value="Chromosome"/>
</dbReference>
<dbReference type="GO" id="GO:0031071">
    <property type="term" value="F:cysteine desulfurase activity"/>
    <property type="evidence" value="ECO:0007669"/>
    <property type="project" value="UniProtKB-EC"/>
</dbReference>
<dbReference type="GO" id="GO:0051536">
    <property type="term" value="F:iron-sulfur cluster binding"/>
    <property type="evidence" value="ECO:0007669"/>
    <property type="project" value="UniProtKB-KW"/>
</dbReference>
<dbReference type="GO" id="GO:0046872">
    <property type="term" value="F:metal ion binding"/>
    <property type="evidence" value="ECO:0007669"/>
    <property type="project" value="UniProtKB-KW"/>
</dbReference>
<dbReference type="FunFam" id="3.40.640.10:FF:000084">
    <property type="entry name" value="IscS-like cysteine desulfurase"/>
    <property type="match status" value="1"/>
</dbReference>
<dbReference type="Gene3D" id="1.10.260.50">
    <property type="match status" value="1"/>
</dbReference>
<dbReference type="Gene3D" id="3.90.1150.10">
    <property type="entry name" value="Aspartate Aminotransferase, domain 1"/>
    <property type="match status" value="1"/>
</dbReference>
<dbReference type="Gene3D" id="3.40.640.10">
    <property type="entry name" value="Type I PLP-dependent aspartate aminotransferase-like (Major domain)"/>
    <property type="match status" value="1"/>
</dbReference>
<dbReference type="InterPro" id="IPR000192">
    <property type="entry name" value="Aminotrans_V_dom"/>
</dbReference>
<dbReference type="InterPro" id="IPR020578">
    <property type="entry name" value="Aminotrans_V_PyrdxlP_BS"/>
</dbReference>
<dbReference type="InterPro" id="IPR016454">
    <property type="entry name" value="Cysteine_dSase"/>
</dbReference>
<dbReference type="InterPro" id="IPR015424">
    <property type="entry name" value="PyrdxlP-dep_Trfase"/>
</dbReference>
<dbReference type="InterPro" id="IPR015421">
    <property type="entry name" value="PyrdxlP-dep_Trfase_major"/>
</dbReference>
<dbReference type="InterPro" id="IPR015422">
    <property type="entry name" value="PyrdxlP-dep_Trfase_small"/>
</dbReference>
<dbReference type="NCBIfam" id="NF002806">
    <property type="entry name" value="PRK02948.1"/>
    <property type="match status" value="1"/>
</dbReference>
<dbReference type="PANTHER" id="PTHR11601:SF34">
    <property type="entry name" value="CYSTEINE DESULFURASE"/>
    <property type="match status" value="1"/>
</dbReference>
<dbReference type="PANTHER" id="PTHR11601">
    <property type="entry name" value="CYSTEINE DESULFURYLASE FAMILY MEMBER"/>
    <property type="match status" value="1"/>
</dbReference>
<dbReference type="Pfam" id="PF00266">
    <property type="entry name" value="Aminotran_5"/>
    <property type="match status" value="1"/>
</dbReference>
<dbReference type="PIRSF" id="PIRSF005572">
    <property type="entry name" value="NifS"/>
    <property type="match status" value="1"/>
</dbReference>
<dbReference type="SUPFAM" id="SSF53383">
    <property type="entry name" value="PLP-dependent transferases"/>
    <property type="match status" value="1"/>
</dbReference>
<dbReference type="PROSITE" id="PS00595">
    <property type="entry name" value="AA_TRANSFER_CLASS_5"/>
    <property type="match status" value="1"/>
</dbReference>
<proteinExistence type="inferred from homology"/>
<feature type="chain" id="PRO_0000386536" description="Putative cysteine desulfurase IscS 1">
    <location>
        <begin position="1"/>
        <end position="379"/>
    </location>
</feature>
<feature type="active site" description="Cysteine persulfide intermediate" evidence="2">
    <location>
        <position position="325"/>
    </location>
</feature>
<feature type="binding site" evidence="3">
    <location>
        <begin position="71"/>
        <end position="72"/>
    </location>
    <ligand>
        <name>pyridoxal 5'-phosphate</name>
        <dbReference type="ChEBI" id="CHEBI:597326"/>
    </ligand>
</feature>
<feature type="binding site" evidence="1">
    <location>
        <position position="151"/>
    </location>
    <ligand>
        <name>pyridoxal 5'-phosphate</name>
        <dbReference type="ChEBI" id="CHEBI:597326"/>
    </ligand>
</feature>
<feature type="binding site" evidence="3">
    <location>
        <position position="179"/>
    </location>
    <ligand>
        <name>pyridoxal 5'-phosphate</name>
        <dbReference type="ChEBI" id="CHEBI:597326"/>
    </ligand>
</feature>
<feature type="binding site" evidence="3">
    <location>
        <begin position="199"/>
        <end position="201"/>
    </location>
    <ligand>
        <name>pyridoxal 5'-phosphate</name>
        <dbReference type="ChEBI" id="CHEBI:597326"/>
    </ligand>
</feature>
<feature type="binding site" evidence="3">
    <location>
        <position position="237"/>
    </location>
    <ligand>
        <name>pyridoxal 5'-phosphate</name>
        <dbReference type="ChEBI" id="CHEBI:597326"/>
    </ligand>
</feature>
<feature type="binding site" description="via persulfide group" evidence="1">
    <location>
        <position position="325"/>
    </location>
    <ligand>
        <name>[2Fe-2S] cluster</name>
        <dbReference type="ChEBI" id="CHEBI:190135"/>
    </ligand>
</feature>
<feature type="modified residue" description="N6-(pyridoxal phosphate)lysine" evidence="3">
    <location>
        <position position="202"/>
    </location>
</feature>
<accession>O34599</accession>
<reference key="1">
    <citation type="journal article" date="1997" name="Nature">
        <title>The complete genome sequence of the Gram-positive bacterium Bacillus subtilis.</title>
        <authorList>
            <person name="Kunst F."/>
            <person name="Ogasawara N."/>
            <person name="Moszer I."/>
            <person name="Albertini A.M."/>
            <person name="Alloni G."/>
            <person name="Azevedo V."/>
            <person name="Bertero M.G."/>
            <person name="Bessieres P."/>
            <person name="Bolotin A."/>
            <person name="Borchert S."/>
            <person name="Borriss R."/>
            <person name="Boursier L."/>
            <person name="Brans A."/>
            <person name="Braun M."/>
            <person name="Brignell S.C."/>
            <person name="Bron S."/>
            <person name="Brouillet S."/>
            <person name="Bruschi C.V."/>
            <person name="Caldwell B."/>
            <person name="Capuano V."/>
            <person name="Carter N.M."/>
            <person name="Choi S.-K."/>
            <person name="Codani J.-J."/>
            <person name="Connerton I.F."/>
            <person name="Cummings N.J."/>
            <person name="Daniel R.A."/>
            <person name="Denizot F."/>
            <person name="Devine K.M."/>
            <person name="Duesterhoeft A."/>
            <person name="Ehrlich S.D."/>
            <person name="Emmerson P.T."/>
            <person name="Entian K.-D."/>
            <person name="Errington J."/>
            <person name="Fabret C."/>
            <person name="Ferrari E."/>
            <person name="Foulger D."/>
            <person name="Fritz C."/>
            <person name="Fujita M."/>
            <person name="Fujita Y."/>
            <person name="Fuma S."/>
            <person name="Galizzi A."/>
            <person name="Galleron N."/>
            <person name="Ghim S.-Y."/>
            <person name="Glaser P."/>
            <person name="Goffeau A."/>
            <person name="Golightly E.J."/>
            <person name="Grandi G."/>
            <person name="Guiseppi G."/>
            <person name="Guy B.J."/>
            <person name="Haga K."/>
            <person name="Haiech J."/>
            <person name="Harwood C.R."/>
            <person name="Henaut A."/>
            <person name="Hilbert H."/>
            <person name="Holsappel S."/>
            <person name="Hosono S."/>
            <person name="Hullo M.-F."/>
            <person name="Itaya M."/>
            <person name="Jones L.-M."/>
            <person name="Joris B."/>
            <person name="Karamata D."/>
            <person name="Kasahara Y."/>
            <person name="Klaerr-Blanchard M."/>
            <person name="Klein C."/>
            <person name="Kobayashi Y."/>
            <person name="Koetter P."/>
            <person name="Koningstein G."/>
            <person name="Krogh S."/>
            <person name="Kumano M."/>
            <person name="Kurita K."/>
            <person name="Lapidus A."/>
            <person name="Lardinois S."/>
            <person name="Lauber J."/>
            <person name="Lazarevic V."/>
            <person name="Lee S.-M."/>
            <person name="Levine A."/>
            <person name="Liu H."/>
            <person name="Masuda S."/>
            <person name="Mauel C."/>
            <person name="Medigue C."/>
            <person name="Medina N."/>
            <person name="Mellado R.P."/>
            <person name="Mizuno M."/>
            <person name="Moestl D."/>
            <person name="Nakai S."/>
            <person name="Noback M."/>
            <person name="Noone D."/>
            <person name="O'Reilly M."/>
            <person name="Ogawa K."/>
            <person name="Ogiwara A."/>
            <person name="Oudega B."/>
            <person name="Park S.-H."/>
            <person name="Parro V."/>
            <person name="Pohl T.M."/>
            <person name="Portetelle D."/>
            <person name="Porwollik S."/>
            <person name="Prescott A.M."/>
            <person name="Presecan E."/>
            <person name="Pujic P."/>
            <person name="Purnelle B."/>
            <person name="Rapoport G."/>
            <person name="Rey M."/>
            <person name="Reynolds S."/>
            <person name="Rieger M."/>
            <person name="Rivolta C."/>
            <person name="Rocha E."/>
            <person name="Roche B."/>
            <person name="Rose M."/>
            <person name="Sadaie Y."/>
            <person name="Sato T."/>
            <person name="Scanlan E."/>
            <person name="Schleich S."/>
            <person name="Schroeter R."/>
            <person name="Scoffone F."/>
            <person name="Sekiguchi J."/>
            <person name="Sekowska A."/>
            <person name="Seror S.J."/>
            <person name="Serror P."/>
            <person name="Shin B.-S."/>
            <person name="Soldo B."/>
            <person name="Sorokin A."/>
            <person name="Tacconi E."/>
            <person name="Takagi T."/>
            <person name="Takahashi H."/>
            <person name="Takemaru K."/>
            <person name="Takeuchi M."/>
            <person name="Tamakoshi A."/>
            <person name="Tanaka T."/>
            <person name="Terpstra P."/>
            <person name="Tognoni A."/>
            <person name="Tosato V."/>
            <person name="Uchiyama S."/>
            <person name="Vandenbol M."/>
            <person name="Vannier F."/>
            <person name="Vassarotti A."/>
            <person name="Viari A."/>
            <person name="Wambutt R."/>
            <person name="Wedler E."/>
            <person name="Wedler H."/>
            <person name="Weitzenegger T."/>
            <person name="Winters P."/>
            <person name="Wipat A."/>
            <person name="Yamamoto H."/>
            <person name="Yamane K."/>
            <person name="Yasumoto K."/>
            <person name="Yata K."/>
            <person name="Yoshida K."/>
            <person name="Yoshikawa H.-F."/>
            <person name="Zumstein E."/>
            <person name="Yoshikawa H."/>
            <person name="Danchin A."/>
        </authorList>
    </citation>
    <scope>NUCLEOTIDE SEQUENCE [LARGE SCALE GENOMIC DNA]</scope>
    <source>
        <strain>168</strain>
    </source>
</reference>
<protein>
    <recommendedName>
        <fullName evidence="4">Putative cysteine desulfurase IscS 1</fullName>
        <ecNumber evidence="3">2.8.1.7</ecNumber>
    </recommendedName>
</protein>
<name>ISCS1_BACSU</name>
<gene>
    <name type="primary">iscS1</name>
    <name type="synonym">yrvO</name>
    <name type="ordered locus">BSU27510</name>
</gene>
<keyword id="KW-0408">Iron</keyword>
<keyword id="KW-0411">Iron-sulfur</keyword>
<keyword id="KW-0479">Metal-binding</keyword>
<keyword id="KW-0663">Pyridoxal phosphate</keyword>
<keyword id="KW-1185">Reference proteome</keyword>
<keyword id="KW-0808">Transferase</keyword>
<evidence type="ECO:0000250" key="1">
    <source>
        <dbReference type="UniProtKB" id="O29689"/>
    </source>
</evidence>
<evidence type="ECO:0000250" key="2">
    <source>
        <dbReference type="UniProtKB" id="P0A6B7"/>
    </source>
</evidence>
<evidence type="ECO:0000250" key="3">
    <source>
        <dbReference type="UniProtKB" id="P0A6B9"/>
    </source>
</evidence>
<evidence type="ECO:0000305" key="4"/>
<organism>
    <name type="scientific">Bacillus subtilis (strain 168)</name>
    <dbReference type="NCBI Taxonomy" id="224308"/>
    <lineage>
        <taxon>Bacteria</taxon>
        <taxon>Bacillati</taxon>
        <taxon>Bacillota</taxon>
        <taxon>Bacilli</taxon>
        <taxon>Bacillales</taxon>
        <taxon>Bacillaceae</taxon>
        <taxon>Bacillus</taxon>
    </lineage>
</organism>
<sequence length="379" mass="41192">MERIYLDHAATSPMDERVLEQMIPHFSGSFGNPSSIHSFGRESRKWVDEARAQIAAEIGAAEQEIIFTSGGTEADNLAIMGTALARKDLGRHIITTKIEHHAVLHTCEKLEGDGFDITYLDVDQNGRVSAKQVKEALRDDTILVTVMYGNNEVGTVQPIEEIGELLKEHKAYFHTDAVQAFGLLPIDVKNSHIDLLSVSGHKLNGPKGTGFLYASKDVKLSPLLFGGEQERKRRAGTENVPGIVGLKEAIKLSSEERDEKNEKYQSFKAIFADTLRDAGVAFEVNGDKEHSLPHVLNLYFPGVSVEALLVNLDMAGVAVSSGSACTAGSVLPSHVLTAMFGEESDRLTSSIRISFGLGNTAEQVKTAAKHVADVVKRLT</sequence>